<organism>
    <name type="scientific">Debaryomyces hansenii (strain ATCC 36239 / CBS 767 / BCRC 21394 / JCM 1990 / NBRC 0083 / IGC 2968)</name>
    <name type="common">Yeast</name>
    <name type="synonym">Torulaspora hansenii</name>
    <dbReference type="NCBI Taxonomy" id="284592"/>
    <lineage>
        <taxon>Eukaryota</taxon>
        <taxon>Fungi</taxon>
        <taxon>Dikarya</taxon>
        <taxon>Ascomycota</taxon>
        <taxon>Saccharomycotina</taxon>
        <taxon>Pichiomycetes</taxon>
        <taxon>Debaryomycetaceae</taxon>
        <taxon>Debaryomyces</taxon>
    </lineage>
</organism>
<name>ATM1_DEBHA</name>
<accession>Q6BXD7</accession>
<feature type="transit peptide" description="Mitochondrion" evidence="5">
    <location>
        <begin position="1"/>
        <end position="67"/>
    </location>
</feature>
<feature type="chain" id="PRO_0000255444" description="Iron-sulfur clusters transporter ATM1, mitochondrial">
    <location>
        <begin position="68"/>
        <end position="696"/>
    </location>
</feature>
<feature type="topological domain" description="Mitochondrial matrix" evidence="2">
    <location>
        <begin position="68"/>
        <end position="109"/>
    </location>
</feature>
<feature type="transmembrane region" description="Helical" evidence="7">
    <location>
        <begin position="110"/>
        <end position="131"/>
    </location>
</feature>
<feature type="topological domain" description="Mitochondrial intermembrane" evidence="2">
    <location>
        <begin position="132"/>
        <end position="154"/>
    </location>
</feature>
<feature type="transmembrane region" description="Helical" evidence="7">
    <location>
        <begin position="155"/>
        <end position="178"/>
    </location>
</feature>
<feature type="topological domain" description="Mitochondrial matrix" evidence="2">
    <location>
        <begin position="179"/>
        <end position="227"/>
    </location>
</feature>
<feature type="transmembrane region" description="Helical" evidence="7">
    <location>
        <begin position="228"/>
        <end position="251"/>
    </location>
</feature>
<feature type="topological domain" description="Mitochondrial intermembrane" evidence="2">
    <location>
        <position position="252"/>
    </location>
</feature>
<feature type="transmembrane region" description="Helical" evidence="7">
    <location>
        <begin position="253"/>
        <end position="273"/>
    </location>
</feature>
<feature type="topological domain" description="Mitochondrial matrix" evidence="1 2">
    <location>
        <begin position="274"/>
        <end position="339"/>
    </location>
</feature>
<feature type="transmembrane region" description="Helical" evidence="7">
    <location>
        <begin position="340"/>
        <end position="358"/>
    </location>
</feature>
<feature type="topological domain" description="Mitochondrial intermembrane" evidence="2">
    <location>
        <begin position="359"/>
        <end position="373"/>
    </location>
</feature>
<feature type="transmembrane region" description="Helical" evidence="7">
    <location>
        <begin position="374"/>
        <end position="395"/>
    </location>
</feature>
<feature type="topological domain" description="Mitochondrial matrix" evidence="2">
    <location>
        <begin position="396"/>
        <end position="696"/>
    </location>
</feature>
<feature type="domain" description="ABC transmembrane type-1" evidence="7">
    <location>
        <begin position="110"/>
        <end position="400"/>
    </location>
</feature>
<feature type="domain" description="ABC transporter" evidence="6">
    <location>
        <begin position="438"/>
        <end position="674"/>
    </location>
</feature>
<feature type="binding site" evidence="2">
    <location>
        <begin position="279"/>
        <end position="283"/>
    </location>
    <ligand>
        <name>glutathione</name>
        <dbReference type="ChEBI" id="CHEBI:57925"/>
    </ligand>
</feature>
<feature type="binding site" evidence="2">
    <location>
        <begin position="342"/>
        <end position="345"/>
    </location>
    <ligand>
        <name>glutathione</name>
        <dbReference type="ChEBI" id="CHEBI:57925"/>
    </ligand>
</feature>
<feature type="binding site" evidence="3">
    <location>
        <position position="392"/>
    </location>
    <ligand>
        <name>glutathione</name>
        <dbReference type="ChEBI" id="CHEBI:57925"/>
    </ligand>
</feature>
<feature type="binding site" evidence="4">
    <location>
        <position position="447"/>
    </location>
    <ligand>
        <name>ATP</name>
        <dbReference type="ChEBI" id="CHEBI:30616"/>
    </ligand>
</feature>
<feature type="binding site" evidence="6">
    <location>
        <begin position="471"/>
        <end position="482"/>
    </location>
    <ligand>
        <name>ATP</name>
        <dbReference type="ChEBI" id="CHEBI:30616"/>
    </ligand>
</feature>
<sequence>MIKWGLFGAVKPFRSMVPLSQTRSLIISKSSLVRSKRVSTIRPQLAPVNPYSKIYGRRFFSSSHKLGVNTKEDSSTYLFGRKISTSESKMLKSLLVTIWPKNKPSFKLRVIFALSLLIASKLLNVEVPFFFKKIIDEMNVDWNDQLGTVGTVIGTLIIAYGGARFGAVLFGELRNAVFASVAQTAIKRVAHNTFVHLLNMDLNFHLSRQTGGLTRAIDRGTKGISYVLNAMVFHIIPISFEISMVCGILIYNYGLSFAAVTLATMLSYSVFTIKTTAWRTGFRRQANNADNQAATVALDSLLNYESVKYFNNEGFQASKYNTALTNYQNASVKVATSLAYLNAGQNFIFTSALTAMMYMGCNGVATGSLTVGDLVLINQLVFQLSVPLSFLGSVYRELKQSLLDMENLFQLQNHEIKIKDASNAKPLLLNSTGVPGEIKFENVTFGYHPDRPILQNASFTIPAGEKIAIVGPSGSGKSTILRLIFRFYDVESGKIFIDGQDISKVTVESLRRSIGIVPQDTPLFNDTILENIRYGRLDATDKEIHEMIDKVQLTKLIEDSPNGVNTIVGERGMMISGGEKQRLAIARLLLKRAPITLFDEATSALDTHTEQSLLRTIRKVLTKKANTHIAIAHRLRTIADADKIIVLNKGQVQEEGTHHNLLQNPNSLYSQLWNIQENLDIDEELNEYAKETEEQK</sequence>
<keyword id="KW-0067">ATP-binding</keyword>
<keyword id="KW-0472">Membrane</keyword>
<keyword id="KW-0496">Mitochondrion</keyword>
<keyword id="KW-0999">Mitochondrion inner membrane</keyword>
<keyword id="KW-0547">Nucleotide-binding</keyword>
<keyword id="KW-1185">Reference proteome</keyword>
<keyword id="KW-0809">Transit peptide</keyword>
<keyword id="KW-1278">Translocase</keyword>
<keyword id="KW-0812">Transmembrane</keyword>
<keyword id="KW-1133">Transmembrane helix</keyword>
<keyword id="KW-0813">Transport</keyword>
<reference key="1">
    <citation type="journal article" date="2004" name="Nature">
        <title>Genome evolution in yeasts.</title>
        <authorList>
            <person name="Dujon B."/>
            <person name="Sherman D."/>
            <person name="Fischer G."/>
            <person name="Durrens P."/>
            <person name="Casaregola S."/>
            <person name="Lafontaine I."/>
            <person name="de Montigny J."/>
            <person name="Marck C."/>
            <person name="Neuveglise C."/>
            <person name="Talla E."/>
            <person name="Goffard N."/>
            <person name="Frangeul L."/>
            <person name="Aigle M."/>
            <person name="Anthouard V."/>
            <person name="Babour A."/>
            <person name="Barbe V."/>
            <person name="Barnay S."/>
            <person name="Blanchin S."/>
            <person name="Beckerich J.-M."/>
            <person name="Beyne E."/>
            <person name="Bleykasten C."/>
            <person name="Boisrame A."/>
            <person name="Boyer J."/>
            <person name="Cattolico L."/>
            <person name="Confanioleri F."/>
            <person name="de Daruvar A."/>
            <person name="Despons L."/>
            <person name="Fabre E."/>
            <person name="Fairhead C."/>
            <person name="Ferry-Dumazet H."/>
            <person name="Groppi A."/>
            <person name="Hantraye F."/>
            <person name="Hennequin C."/>
            <person name="Jauniaux N."/>
            <person name="Joyet P."/>
            <person name="Kachouri R."/>
            <person name="Kerrest A."/>
            <person name="Koszul R."/>
            <person name="Lemaire M."/>
            <person name="Lesur I."/>
            <person name="Ma L."/>
            <person name="Muller H."/>
            <person name="Nicaud J.-M."/>
            <person name="Nikolski M."/>
            <person name="Oztas S."/>
            <person name="Ozier-Kalogeropoulos O."/>
            <person name="Pellenz S."/>
            <person name="Potier S."/>
            <person name="Richard G.-F."/>
            <person name="Straub M.-L."/>
            <person name="Suleau A."/>
            <person name="Swennen D."/>
            <person name="Tekaia F."/>
            <person name="Wesolowski-Louvel M."/>
            <person name="Westhof E."/>
            <person name="Wirth B."/>
            <person name="Zeniou-Meyer M."/>
            <person name="Zivanovic Y."/>
            <person name="Bolotin-Fukuhara M."/>
            <person name="Thierry A."/>
            <person name="Bouchier C."/>
            <person name="Caudron B."/>
            <person name="Scarpelli C."/>
            <person name="Gaillardin C."/>
            <person name="Weissenbach J."/>
            <person name="Wincker P."/>
            <person name="Souciet J.-L."/>
        </authorList>
    </citation>
    <scope>NUCLEOTIDE SEQUENCE [LARGE SCALE GENOMIC DNA]</scope>
    <source>
        <strain>ATCC 36239 / CBS 767 / BCRC 21394 / JCM 1990 / NBRC 0083 / IGC 2968</strain>
    </source>
</reference>
<protein>
    <recommendedName>
        <fullName evidence="8">Iron-sulfur clusters transporter ATM1, mitochondrial</fullName>
        <ecNumber evidence="3">7.-.-.-</ecNumber>
    </recommendedName>
</protein>
<evidence type="ECO:0000250" key="1"/>
<evidence type="ECO:0000250" key="2">
    <source>
        <dbReference type="UniProtKB" id="P40416"/>
    </source>
</evidence>
<evidence type="ECO:0000250" key="3">
    <source>
        <dbReference type="UniProtKB" id="Q2G506"/>
    </source>
</evidence>
<evidence type="ECO:0000250" key="4">
    <source>
        <dbReference type="UniProtKB" id="Q9NP58"/>
    </source>
</evidence>
<evidence type="ECO:0000255" key="5"/>
<evidence type="ECO:0000255" key="6">
    <source>
        <dbReference type="PROSITE-ProRule" id="PRU00434"/>
    </source>
</evidence>
<evidence type="ECO:0000255" key="7">
    <source>
        <dbReference type="PROSITE-ProRule" id="PRU00441"/>
    </source>
</evidence>
<evidence type="ECO:0000305" key="8"/>
<comment type="function">
    <text evidence="2">Performs an essential function in the generation of cytoplasmic iron-sulfur proteins by mediating the ATP-dependent export of Fe/S cluster precursors synthesized by NFS1 and other mitochondrial proteins (By similarity). Hydrolyzes ATP (By similarity). Binds glutathione and may function by transporting a glutathione-conjugated iron-sulfur compound (By similarity).</text>
</comment>
<comment type="subunit">
    <text evidence="2">Homodimer.</text>
</comment>
<comment type="subcellular location">
    <subcellularLocation>
        <location evidence="2">Mitochondrion inner membrane</location>
        <topology evidence="7">Multi-pass membrane protein</topology>
    </subcellularLocation>
</comment>
<comment type="similarity">
    <text evidence="8">Belongs to the ABC transporter superfamily. ABCB family. Heavy Metal importer (TC 3.A.1.210) subfamily.</text>
</comment>
<proteinExistence type="inferred from homology"/>
<gene>
    <name evidence="8" type="primary">ATM1</name>
    <name type="ordered locus">DEHA2B03894g</name>
</gene>
<dbReference type="EC" id="7.-.-.-" evidence="3"/>
<dbReference type="EMBL" id="CR382134">
    <property type="protein sequence ID" value="CAG85125.2"/>
    <property type="molecule type" value="Genomic_DNA"/>
</dbReference>
<dbReference type="RefSeq" id="XP_457132.2">
    <property type="nucleotide sequence ID" value="XM_457132.1"/>
</dbReference>
<dbReference type="SMR" id="Q6BXD7"/>
<dbReference type="FunCoup" id="Q6BXD7">
    <property type="interactions" value="713"/>
</dbReference>
<dbReference type="STRING" id="284592.Q6BXD7"/>
<dbReference type="GeneID" id="2913198"/>
<dbReference type="KEGG" id="dha:DEHA2B03894g"/>
<dbReference type="VEuPathDB" id="FungiDB:DEHA2B03894g"/>
<dbReference type="eggNOG" id="KOG0057">
    <property type="taxonomic scope" value="Eukaryota"/>
</dbReference>
<dbReference type="HOGENOM" id="CLU_000604_84_1_1"/>
<dbReference type="InParanoid" id="Q6BXD7"/>
<dbReference type="OMA" id="VFHIIPI"/>
<dbReference type="OrthoDB" id="6500128at2759"/>
<dbReference type="Proteomes" id="UP000000599">
    <property type="component" value="Chromosome B"/>
</dbReference>
<dbReference type="GO" id="GO:0005743">
    <property type="term" value="C:mitochondrial inner membrane"/>
    <property type="evidence" value="ECO:0007669"/>
    <property type="project" value="UniProtKB-SubCell"/>
</dbReference>
<dbReference type="GO" id="GO:0140359">
    <property type="term" value="F:ABC-type transporter activity"/>
    <property type="evidence" value="ECO:0007669"/>
    <property type="project" value="InterPro"/>
</dbReference>
<dbReference type="GO" id="GO:0005524">
    <property type="term" value="F:ATP binding"/>
    <property type="evidence" value="ECO:0007669"/>
    <property type="project" value="UniProtKB-KW"/>
</dbReference>
<dbReference type="GO" id="GO:0016887">
    <property type="term" value="F:ATP hydrolysis activity"/>
    <property type="evidence" value="ECO:0007669"/>
    <property type="project" value="InterPro"/>
</dbReference>
<dbReference type="GO" id="GO:0006879">
    <property type="term" value="P:intracellular iron ion homeostasis"/>
    <property type="evidence" value="ECO:0007669"/>
    <property type="project" value="TreeGrafter"/>
</dbReference>
<dbReference type="CDD" id="cd18582">
    <property type="entry name" value="ABC_6TM_ATM1_ABCB7"/>
    <property type="match status" value="1"/>
</dbReference>
<dbReference type="FunFam" id="1.20.1560.10:FF:000004">
    <property type="entry name" value="ATP-binding cassette sub-family B member 7"/>
    <property type="match status" value="1"/>
</dbReference>
<dbReference type="FunFam" id="3.40.50.300:FF:000287">
    <property type="entry name" value="Multidrug ABC transporter ATP-binding protein"/>
    <property type="match status" value="1"/>
</dbReference>
<dbReference type="Gene3D" id="1.20.1560.10">
    <property type="entry name" value="ABC transporter type 1, transmembrane domain"/>
    <property type="match status" value="1"/>
</dbReference>
<dbReference type="Gene3D" id="3.40.50.300">
    <property type="entry name" value="P-loop containing nucleotide triphosphate hydrolases"/>
    <property type="match status" value="1"/>
</dbReference>
<dbReference type="InterPro" id="IPR003593">
    <property type="entry name" value="AAA+_ATPase"/>
</dbReference>
<dbReference type="InterPro" id="IPR011527">
    <property type="entry name" value="ABC1_TM_dom"/>
</dbReference>
<dbReference type="InterPro" id="IPR036640">
    <property type="entry name" value="ABC1_TM_sf"/>
</dbReference>
<dbReference type="InterPro" id="IPR003439">
    <property type="entry name" value="ABC_transporter-like_ATP-bd"/>
</dbReference>
<dbReference type="InterPro" id="IPR017871">
    <property type="entry name" value="ABC_transporter-like_CS"/>
</dbReference>
<dbReference type="InterPro" id="IPR027417">
    <property type="entry name" value="P-loop_NTPase"/>
</dbReference>
<dbReference type="InterPro" id="IPR039421">
    <property type="entry name" value="Type_1_exporter"/>
</dbReference>
<dbReference type="PANTHER" id="PTHR24221">
    <property type="entry name" value="ATP-BINDING CASSETTE SUB-FAMILY B"/>
    <property type="match status" value="1"/>
</dbReference>
<dbReference type="PANTHER" id="PTHR24221:SF402">
    <property type="entry name" value="IRON-SULFUR CLUSTERS TRANSPORTER ABCB7, MITOCHONDRIAL"/>
    <property type="match status" value="1"/>
</dbReference>
<dbReference type="Pfam" id="PF00664">
    <property type="entry name" value="ABC_membrane"/>
    <property type="match status" value="1"/>
</dbReference>
<dbReference type="Pfam" id="PF00005">
    <property type="entry name" value="ABC_tran"/>
    <property type="match status" value="1"/>
</dbReference>
<dbReference type="SMART" id="SM00382">
    <property type="entry name" value="AAA"/>
    <property type="match status" value="1"/>
</dbReference>
<dbReference type="SUPFAM" id="SSF90123">
    <property type="entry name" value="ABC transporter transmembrane region"/>
    <property type="match status" value="1"/>
</dbReference>
<dbReference type="SUPFAM" id="SSF52540">
    <property type="entry name" value="P-loop containing nucleoside triphosphate hydrolases"/>
    <property type="match status" value="1"/>
</dbReference>
<dbReference type="PROSITE" id="PS50929">
    <property type="entry name" value="ABC_TM1F"/>
    <property type="match status" value="1"/>
</dbReference>
<dbReference type="PROSITE" id="PS00211">
    <property type="entry name" value="ABC_TRANSPORTER_1"/>
    <property type="match status" value="1"/>
</dbReference>
<dbReference type="PROSITE" id="PS50893">
    <property type="entry name" value="ABC_TRANSPORTER_2"/>
    <property type="match status" value="1"/>
</dbReference>